<keyword id="KW-0496">Mitochondrion</keyword>
<keyword id="KW-1185">Reference proteome</keyword>
<keyword id="KW-0809">Transit peptide</keyword>
<accession>Q6CQ76</accession>
<organism>
    <name type="scientific">Kluyveromyces lactis (strain ATCC 8585 / CBS 2359 / DSM 70799 / NBRC 1267 / NRRL Y-1140 / WM37)</name>
    <name type="common">Yeast</name>
    <name type="synonym">Candida sphaerica</name>
    <dbReference type="NCBI Taxonomy" id="284590"/>
    <lineage>
        <taxon>Eukaryota</taxon>
        <taxon>Fungi</taxon>
        <taxon>Dikarya</taxon>
        <taxon>Ascomycota</taxon>
        <taxon>Saccharomycotina</taxon>
        <taxon>Saccharomycetes</taxon>
        <taxon>Saccharomycetales</taxon>
        <taxon>Saccharomycetaceae</taxon>
        <taxon>Kluyveromyces</taxon>
    </lineage>
</organism>
<name>RRG9_KLULA</name>
<evidence type="ECO:0000250" key="1"/>
<evidence type="ECO:0000255" key="2"/>
<evidence type="ECO:0000305" key="3"/>
<proteinExistence type="inferred from homology"/>
<protein>
    <recommendedName>
        <fullName>Required for respiratory growth protein 9, mitochondrial</fullName>
    </recommendedName>
</protein>
<comment type="function">
    <text evidence="1">Required for respiratory activity and maintenance and expression of the mitochondrial genome.</text>
</comment>
<comment type="subcellular location">
    <subcellularLocation>
        <location evidence="1">Mitochondrion</location>
    </subcellularLocation>
</comment>
<comment type="similarity">
    <text evidence="3">Belongs to the RRG9 family.</text>
</comment>
<reference key="1">
    <citation type="journal article" date="2004" name="Nature">
        <title>Genome evolution in yeasts.</title>
        <authorList>
            <person name="Dujon B."/>
            <person name="Sherman D."/>
            <person name="Fischer G."/>
            <person name="Durrens P."/>
            <person name="Casaregola S."/>
            <person name="Lafontaine I."/>
            <person name="de Montigny J."/>
            <person name="Marck C."/>
            <person name="Neuveglise C."/>
            <person name="Talla E."/>
            <person name="Goffard N."/>
            <person name="Frangeul L."/>
            <person name="Aigle M."/>
            <person name="Anthouard V."/>
            <person name="Babour A."/>
            <person name="Barbe V."/>
            <person name="Barnay S."/>
            <person name="Blanchin S."/>
            <person name="Beckerich J.-M."/>
            <person name="Beyne E."/>
            <person name="Bleykasten C."/>
            <person name="Boisrame A."/>
            <person name="Boyer J."/>
            <person name="Cattolico L."/>
            <person name="Confanioleri F."/>
            <person name="de Daruvar A."/>
            <person name="Despons L."/>
            <person name="Fabre E."/>
            <person name="Fairhead C."/>
            <person name="Ferry-Dumazet H."/>
            <person name="Groppi A."/>
            <person name="Hantraye F."/>
            <person name="Hennequin C."/>
            <person name="Jauniaux N."/>
            <person name="Joyet P."/>
            <person name="Kachouri R."/>
            <person name="Kerrest A."/>
            <person name="Koszul R."/>
            <person name="Lemaire M."/>
            <person name="Lesur I."/>
            <person name="Ma L."/>
            <person name="Muller H."/>
            <person name="Nicaud J.-M."/>
            <person name="Nikolski M."/>
            <person name="Oztas S."/>
            <person name="Ozier-Kalogeropoulos O."/>
            <person name="Pellenz S."/>
            <person name="Potier S."/>
            <person name="Richard G.-F."/>
            <person name="Straub M.-L."/>
            <person name="Suleau A."/>
            <person name="Swennen D."/>
            <person name="Tekaia F."/>
            <person name="Wesolowski-Louvel M."/>
            <person name="Westhof E."/>
            <person name="Wirth B."/>
            <person name="Zeniou-Meyer M."/>
            <person name="Zivanovic Y."/>
            <person name="Bolotin-Fukuhara M."/>
            <person name="Thierry A."/>
            <person name="Bouchier C."/>
            <person name="Caudron B."/>
            <person name="Scarpelli C."/>
            <person name="Gaillardin C."/>
            <person name="Weissenbach J."/>
            <person name="Wincker P."/>
            <person name="Souciet J.-L."/>
        </authorList>
    </citation>
    <scope>NUCLEOTIDE SEQUENCE [LARGE SCALE GENOMIC DNA]</scope>
    <source>
        <strain>ATCC 8585 / CBS 2359 / DSM 70799 / NBRC 1267 / NRRL Y-1140 / WM37</strain>
    </source>
</reference>
<gene>
    <name type="primary">RRG9</name>
    <name type="ordered locus">KLLA0D19184g</name>
</gene>
<sequence length="242" mass="28235">MFKLCGWLLPRSRTLFELRKAGVMPFHSTALTLSENDKIDSSIKVAEIPKKGKAKRLINTVNRSKDNDGHSTWRDNTALPDWKRQKFALKEKLNGERWNPKKKLSREQMETVRLLKRQFPHMTSGDIAIQMKVSPEVVRRILKSKWEPTEEELEDIQRRWKKRSDRILDLYENGKIDGYTGIIPVTRKVVIGGPNSEHIIHRKKPQQDLGPSNKLHYNKSKHIDRGAVKARNNLHLLLKKKI</sequence>
<feature type="transit peptide" description="Mitochondrion" evidence="2">
    <location>
        <begin position="1"/>
        <end position="20"/>
    </location>
</feature>
<feature type="chain" id="PRO_0000407948" description="Required for respiratory growth protein 9, mitochondrial">
    <location>
        <begin position="21"/>
        <end position="242"/>
    </location>
</feature>
<dbReference type="EMBL" id="CR382124">
    <property type="protein sequence ID" value="CAH01009.1"/>
    <property type="molecule type" value="Genomic_DNA"/>
</dbReference>
<dbReference type="RefSeq" id="XP_453913.1">
    <property type="nucleotide sequence ID" value="XM_453913.1"/>
</dbReference>
<dbReference type="SMR" id="Q6CQ76"/>
<dbReference type="FunCoup" id="Q6CQ76">
    <property type="interactions" value="41"/>
</dbReference>
<dbReference type="STRING" id="284590.Q6CQ76"/>
<dbReference type="PaxDb" id="284590-Q6CQ76"/>
<dbReference type="KEGG" id="kla:KLLA0_D19184g"/>
<dbReference type="eggNOG" id="ENOG502S7IA">
    <property type="taxonomic scope" value="Eukaryota"/>
</dbReference>
<dbReference type="HOGENOM" id="CLU_100293_0_0_1"/>
<dbReference type="InParanoid" id="Q6CQ76"/>
<dbReference type="OMA" id="NSHIGPN"/>
<dbReference type="Proteomes" id="UP000000598">
    <property type="component" value="Chromosome D"/>
</dbReference>
<dbReference type="GO" id="GO:0005739">
    <property type="term" value="C:mitochondrion"/>
    <property type="evidence" value="ECO:0007669"/>
    <property type="project" value="UniProtKB-SubCell"/>
</dbReference>
<dbReference type="GO" id="GO:0005634">
    <property type="term" value="C:nucleus"/>
    <property type="evidence" value="ECO:0007669"/>
    <property type="project" value="TreeGrafter"/>
</dbReference>
<dbReference type="InterPro" id="IPR010487">
    <property type="entry name" value="NGRN/Rrg9"/>
</dbReference>
<dbReference type="PANTHER" id="PTHR13475">
    <property type="entry name" value="NEUGRIN"/>
    <property type="match status" value="1"/>
</dbReference>
<dbReference type="PANTHER" id="PTHR13475:SF3">
    <property type="entry name" value="NEUGRIN"/>
    <property type="match status" value="1"/>
</dbReference>
<dbReference type="Pfam" id="PF06413">
    <property type="entry name" value="Neugrin"/>
    <property type="match status" value="1"/>
</dbReference>